<accession>C6DAH5</accession>
<dbReference type="EMBL" id="CP001657">
    <property type="protein sequence ID" value="ACT11983.1"/>
    <property type="molecule type" value="Genomic_DNA"/>
</dbReference>
<dbReference type="RefSeq" id="WP_012773623.1">
    <property type="nucleotide sequence ID" value="NC_012917.1"/>
</dbReference>
<dbReference type="SMR" id="C6DAH5"/>
<dbReference type="STRING" id="561230.PC1_0933"/>
<dbReference type="GeneID" id="67795290"/>
<dbReference type="KEGG" id="pct:PC1_0933"/>
<dbReference type="eggNOG" id="ENOG502ZCMR">
    <property type="taxonomic scope" value="Bacteria"/>
</dbReference>
<dbReference type="HOGENOM" id="CLU_121866_0_0_6"/>
<dbReference type="OrthoDB" id="5599437at2"/>
<dbReference type="Proteomes" id="UP000002736">
    <property type="component" value="Chromosome"/>
</dbReference>
<dbReference type="GO" id="GO:0009898">
    <property type="term" value="C:cytoplasmic side of plasma membrane"/>
    <property type="evidence" value="ECO:0007669"/>
    <property type="project" value="InterPro"/>
</dbReference>
<dbReference type="CDD" id="cd16323">
    <property type="entry name" value="Syd"/>
    <property type="match status" value="1"/>
</dbReference>
<dbReference type="Gene3D" id="3.40.1580.20">
    <property type="entry name" value="Syd protein"/>
    <property type="match status" value="1"/>
</dbReference>
<dbReference type="HAMAP" id="MF_01104">
    <property type="entry name" value="Syd"/>
    <property type="match status" value="1"/>
</dbReference>
<dbReference type="InterPro" id="IPR009948">
    <property type="entry name" value="Syd"/>
</dbReference>
<dbReference type="InterPro" id="IPR038228">
    <property type="entry name" value="Syd_sf"/>
</dbReference>
<dbReference type="NCBIfam" id="NF003439">
    <property type="entry name" value="PRK04968.1"/>
    <property type="match status" value="1"/>
</dbReference>
<dbReference type="Pfam" id="PF07348">
    <property type="entry name" value="Syd"/>
    <property type="match status" value="1"/>
</dbReference>
<sequence>MEHEVVSALAAFTQRYVDCWQQEKGHLPASEALYGIPSPCIVENHEDTVYWSPQPFAPAAALDGVERALEISLHPDVHAFYTAQYAGDMAAQFDSLSCQLLQVWSEDDFTRMQENLIGHLLTQKRLKLTPTLFLATTDSEMTMVSLCNISGEIILEEFGTKKRQILAPTLAAFLFGLNPLAV</sequence>
<evidence type="ECO:0000255" key="1">
    <source>
        <dbReference type="HAMAP-Rule" id="MF_01104"/>
    </source>
</evidence>
<name>SYDP_PECCP</name>
<organism>
    <name type="scientific">Pectobacterium carotovorum subsp. carotovorum (strain PC1)</name>
    <dbReference type="NCBI Taxonomy" id="561230"/>
    <lineage>
        <taxon>Bacteria</taxon>
        <taxon>Pseudomonadati</taxon>
        <taxon>Pseudomonadota</taxon>
        <taxon>Gammaproteobacteria</taxon>
        <taxon>Enterobacterales</taxon>
        <taxon>Pectobacteriaceae</taxon>
        <taxon>Pectobacterium</taxon>
    </lineage>
</organism>
<proteinExistence type="inferred from homology"/>
<gene>
    <name evidence="1" type="primary">syd</name>
    <name type="ordered locus">PC1_0933</name>
</gene>
<feature type="chain" id="PRO_1000213555" description="Protein Syd">
    <location>
        <begin position="1"/>
        <end position="182"/>
    </location>
</feature>
<reference key="1">
    <citation type="submission" date="2009-07" db="EMBL/GenBank/DDBJ databases">
        <title>Complete sequence of Pectobacterium carotovorum subsp. carotovorum PC1.</title>
        <authorList>
            <consortium name="US DOE Joint Genome Institute"/>
            <person name="Lucas S."/>
            <person name="Copeland A."/>
            <person name="Lapidus A."/>
            <person name="Glavina del Rio T."/>
            <person name="Tice H."/>
            <person name="Bruce D."/>
            <person name="Goodwin L."/>
            <person name="Pitluck S."/>
            <person name="Munk A.C."/>
            <person name="Brettin T."/>
            <person name="Detter J.C."/>
            <person name="Han C."/>
            <person name="Tapia R."/>
            <person name="Larimer F."/>
            <person name="Land M."/>
            <person name="Hauser L."/>
            <person name="Kyrpides N."/>
            <person name="Mikhailova N."/>
            <person name="Balakrishnan V."/>
            <person name="Glasner J."/>
            <person name="Perna N.T."/>
        </authorList>
    </citation>
    <scope>NUCLEOTIDE SEQUENCE [LARGE SCALE GENOMIC DNA]</scope>
    <source>
        <strain>PC1</strain>
    </source>
</reference>
<protein>
    <recommendedName>
        <fullName evidence="1">Protein Syd</fullName>
    </recommendedName>
</protein>
<comment type="function">
    <text evidence="1">Interacts with the SecY protein in vivo. May bind preferentially to an uncomplexed state of SecY, thus functioning either as a chelating agent for excess SecY in the cell or as a regulatory factor that negatively controls the translocase function.</text>
</comment>
<comment type="subcellular location">
    <subcellularLocation>
        <location evidence="1">Cell inner membrane</location>
        <topology evidence="1">Peripheral membrane protein</topology>
        <orientation evidence="1">Cytoplasmic side</orientation>
    </subcellularLocation>
    <text evidence="1">Loosely associated with the cytoplasmic side of the inner membrane, probably via SecY.</text>
</comment>
<comment type="similarity">
    <text evidence="1">Belongs to the Syd family.</text>
</comment>
<keyword id="KW-0997">Cell inner membrane</keyword>
<keyword id="KW-1003">Cell membrane</keyword>
<keyword id="KW-0472">Membrane</keyword>